<accession>Q2RP84</accession>
<proteinExistence type="inferred from homology"/>
<name>METXA_RHORT</name>
<comment type="function">
    <text evidence="1">Transfers an acetyl group from acetyl-CoA to L-homoserine, forming acetyl-L-homoserine.</text>
</comment>
<comment type="catalytic activity">
    <reaction evidence="1">
        <text>L-homoserine + acetyl-CoA = O-acetyl-L-homoserine + CoA</text>
        <dbReference type="Rhea" id="RHEA:13701"/>
        <dbReference type="ChEBI" id="CHEBI:57287"/>
        <dbReference type="ChEBI" id="CHEBI:57288"/>
        <dbReference type="ChEBI" id="CHEBI:57476"/>
        <dbReference type="ChEBI" id="CHEBI:57716"/>
        <dbReference type="EC" id="2.3.1.31"/>
    </reaction>
</comment>
<comment type="pathway">
    <text evidence="1">Amino-acid biosynthesis; L-methionine biosynthesis via de novo pathway; O-acetyl-L-homoserine from L-homoserine: step 1/1.</text>
</comment>
<comment type="subunit">
    <text evidence="1">Homodimer.</text>
</comment>
<comment type="subcellular location">
    <subcellularLocation>
        <location evidence="1">Cytoplasm</location>
    </subcellularLocation>
</comment>
<comment type="similarity">
    <text evidence="1">Belongs to the AB hydrolase superfamily. MetX family.</text>
</comment>
<gene>
    <name evidence="1" type="primary">metXA</name>
    <name type="ordered locus">Rru_A3266</name>
</gene>
<keyword id="KW-0012">Acyltransferase</keyword>
<keyword id="KW-0028">Amino-acid biosynthesis</keyword>
<keyword id="KW-0963">Cytoplasm</keyword>
<keyword id="KW-0486">Methionine biosynthesis</keyword>
<keyword id="KW-1185">Reference proteome</keyword>
<keyword id="KW-0808">Transferase</keyword>
<organism>
    <name type="scientific">Rhodospirillum rubrum (strain ATCC 11170 / ATH 1.1.1 / DSM 467 / LMG 4362 / NCIMB 8255 / S1)</name>
    <dbReference type="NCBI Taxonomy" id="269796"/>
    <lineage>
        <taxon>Bacteria</taxon>
        <taxon>Pseudomonadati</taxon>
        <taxon>Pseudomonadota</taxon>
        <taxon>Alphaproteobacteria</taxon>
        <taxon>Rhodospirillales</taxon>
        <taxon>Rhodospirillaceae</taxon>
        <taxon>Rhodospirillum</taxon>
    </lineage>
</organism>
<protein>
    <recommendedName>
        <fullName evidence="1">Homoserine O-acetyltransferase</fullName>
        <shortName evidence="1">HAT</shortName>
        <ecNumber evidence="1">2.3.1.31</ecNumber>
    </recommendedName>
    <alternativeName>
        <fullName evidence="1">Homoserine transacetylase</fullName>
        <shortName evidence="1">HTA</shortName>
    </alternativeName>
</protein>
<evidence type="ECO:0000255" key="1">
    <source>
        <dbReference type="HAMAP-Rule" id="MF_00296"/>
    </source>
</evidence>
<sequence length="391" mass="42656">MNVLPAASQPLNQSVTLCVDAPMRLDSGLELGPLTVAYQTIGRLNAERTNAILICHALTGDQHVIGPHPVTGRPGWWETLVGPGKTIDTDRYFIICSNVLGGCLGTTGPKEINPATGKPWGLGFPVITIGDMVRAQALLLDHLGIERLFCAIGGSMGAMQVLQWAVSYPERVRAVVPIAGSWRHSAQNIAFHEVGRQAIMADPDWNGGDYLNQGTVPRRGLAVARMTAHITYLSEPALQSKFGRKLQDRASITYGFDADFQVESYLRHQGANFVKRFDANSYLYITRAMDYFDLAAEHDGVLARAFQGTKVRFCVVSFTSDWLFPTAESRAVVRAMNAAAADVSFVEVTTDKGHDAFLLDEPEFHDTLQGFLDGAADMFGLPRGLFSGIRP</sequence>
<dbReference type="EC" id="2.3.1.31" evidence="1"/>
<dbReference type="EMBL" id="CP000230">
    <property type="protein sequence ID" value="ABC24061.1"/>
    <property type="molecule type" value="Genomic_DNA"/>
</dbReference>
<dbReference type="RefSeq" id="WP_011391014.1">
    <property type="nucleotide sequence ID" value="NC_007643.1"/>
</dbReference>
<dbReference type="RefSeq" id="YP_428348.1">
    <property type="nucleotide sequence ID" value="NC_007643.1"/>
</dbReference>
<dbReference type="SMR" id="Q2RP84"/>
<dbReference type="STRING" id="269796.Rru_A3266"/>
<dbReference type="ESTHER" id="rhort-metx">
    <property type="family name" value="Homoserine_transacetylase"/>
</dbReference>
<dbReference type="EnsemblBacteria" id="ABC24061">
    <property type="protein sequence ID" value="ABC24061"/>
    <property type="gene ID" value="Rru_A3266"/>
</dbReference>
<dbReference type="KEGG" id="rru:Rru_A3266"/>
<dbReference type="PATRIC" id="fig|269796.9.peg.3383"/>
<dbReference type="eggNOG" id="COG2021">
    <property type="taxonomic scope" value="Bacteria"/>
</dbReference>
<dbReference type="HOGENOM" id="CLU_028760_1_2_5"/>
<dbReference type="PhylomeDB" id="Q2RP84"/>
<dbReference type="UniPathway" id="UPA00051">
    <property type="reaction ID" value="UER00074"/>
</dbReference>
<dbReference type="Proteomes" id="UP000001929">
    <property type="component" value="Chromosome"/>
</dbReference>
<dbReference type="GO" id="GO:0005737">
    <property type="term" value="C:cytoplasm"/>
    <property type="evidence" value="ECO:0007669"/>
    <property type="project" value="UniProtKB-SubCell"/>
</dbReference>
<dbReference type="GO" id="GO:0004414">
    <property type="term" value="F:homoserine O-acetyltransferase activity"/>
    <property type="evidence" value="ECO:0007669"/>
    <property type="project" value="UniProtKB-UniRule"/>
</dbReference>
<dbReference type="GO" id="GO:0009092">
    <property type="term" value="P:homoserine metabolic process"/>
    <property type="evidence" value="ECO:0007669"/>
    <property type="project" value="TreeGrafter"/>
</dbReference>
<dbReference type="GO" id="GO:0009086">
    <property type="term" value="P:methionine biosynthetic process"/>
    <property type="evidence" value="ECO:0007669"/>
    <property type="project" value="UniProtKB-UniRule"/>
</dbReference>
<dbReference type="FunFam" id="1.10.1740.110:FF:000001">
    <property type="entry name" value="Homoserine O-acetyltransferase"/>
    <property type="match status" value="1"/>
</dbReference>
<dbReference type="Gene3D" id="1.10.1740.110">
    <property type="match status" value="1"/>
</dbReference>
<dbReference type="Gene3D" id="3.40.50.1820">
    <property type="entry name" value="alpha/beta hydrolase"/>
    <property type="match status" value="1"/>
</dbReference>
<dbReference type="HAMAP" id="MF_00296">
    <property type="entry name" value="MetX_acyltransf"/>
    <property type="match status" value="1"/>
</dbReference>
<dbReference type="InterPro" id="IPR000073">
    <property type="entry name" value="AB_hydrolase_1"/>
</dbReference>
<dbReference type="InterPro" id="IPR029058">
    <property type="entry name" value="AB_hydrolase_fold"/>
</dbReference>
<dbReference type="InterPro" id="IPR008220">
    <property type="entry name" value="HAT_MetX-like"/>
</dbReference>
<dbReference type="NCBIfam" id="TIGR01392">
    <property type="entry name" value="homoserO_Ac_trn"/>
    <property type="match status" value="1"/>
</dbReference>
<dbReference type="NCBIfam" id="NF001209">
    <property type="entry name" value="PRK00175.1"/>
    <property type="match status" value="1"/>
</dbReference>
<dbReference type="PANTHER" id="PTHR32268">
    <property type="entry name" value="HOMOSERINE O-ACETYLTRANSFERASE"/>
    <property type="match status" value="1"/>
</dbReference>
<dbReference type="PANTHER" id="PTHR32268:SF11">
    <property type="entry name" value="HOMOSERINE O-ACETYLTRANSFERASE"/>
    <property type="match status" value="1"/>
</dbReference>
<dbReference type="Pfam" id="PF00561">
    <property type="entry name" value="Abhydrolase_1"/>
    <property type="match status" value="1"/>
</dbReference>
<dbReference type="PIRSF" id="PIRSF000443">
    <property type="entry name" value="Homoser_Ac_trans"/>
    <property type="match status" value="1"/>
</dbReference>
<dbReference type="SUPFAM" id="SSF53474">
    <property type="entry name" value="alpha/beta-Hydrolases"/>
    <property type="match status" value="1"/>
</dbReference>
<reference key="1">
    <citation type="journal article" date="2011" name="Stand. Genomic Sci.">
        <title>Complete genome sequence of Rhodospirillum rubrum type strain (S1).</title>
        <authorList>
            <person name="Munk A.C."/>
            <person name="Copeland A."/>
            <person name="Lucas S."/>
            <person name="Lapidus A."/>
            <person name="Del Rio T.G."/>
            <person name="Barry K."/>
            <person name="Detter J.C."/>
            <person name="Hammon N."/>
            <person name="Israni S."/>
            <person name="Pitluck S."/>
            <person name="Brettin T."/>
            <person name="Bruce D."/>
            <person name="Han C."/>
            <person name="Tapia R."/>
            <person name="Gilna P."/>
            <person name="Schmutz J."/>
            <person name="Larimer F."/>
            <person name="Land M."/>
            <person name="Kyrpides N.C."/>
            <person name="Mavromatis K."/>
            <person name="Richardson P."/>
            <person name="Rohde M."/>
            <person name="Goeker M."/>
            <person name="Klenk H.P."/>
            <person name="Zhang Y."/>
            <person name="Roberts G.P."/>
            <person name="Reslewic S."/>
            <person name="Schwartz D.C."/>
        </authorList>
    </citation>
    <scope>NUCLEOTIDE SEQUENCE [LARGE SCALE GENOMIC DNA]</scope>
    <source>
        <strain>ATCC 11170 / ATH 1.1.1 / DSM 467 / LMG 4362 / NCIMB 8255 / S1</strain>
    </source>
</reference>
<feature type="chain" id="PRO_0000231886" description="Homoserine O-acetyltransferase">
    <location>
        <begin position="1"/>
        <end position="391"/>
    </location>
</feature>
<feature type="domain" description="AB hydrolase-1" evidence="1">
    <location>
        <begin position="50"/>
        <end position="360"/>
    </location>
</feature>
<feature type="active site" description="Nucleophile" evidence="1">
    <location>
        <position position="155"/>
    </location>
</feature>
<feature type="active site" evidence="1">
    <location>
        <position position="321"/>
    </location>
</feature>
<feature type="active site" evidence="1">
    <location>
        <position position="354"/>
    </location>
</feature>
<feature type="binding site" evidence="1">
    <location>
        <position position="225"/>
    </location>
    <ligand>
        <name>substrate</name>
    </ligand>
</feature>
<feature type="binding site" evidence="1">
    <location>
        <position position="355"/>
    </location>
    <ligand>
        <name>substrate</name>
    </ligand>
</feature>